<evidence type="ECO:0000255" key="1">
    <source>
        <dbReference type="HAMAP-Rule" id="MF_01588"/>
    </source>
</evidence>
<comment type="function">
    <text evidence="1">DNA ligase that catalyzes the formation of phosphodiester linkages between 5'-phosphoryl and 3'-hydroxyl groups in double-stranded DNA using NAD as a coenzyme and as the energy source for the reaction. It is essential for DNA replication and repair of damaged DNA.</text>
</comment>
<comment type="catalytic activity">
    <reaction evidence="1">
        <text>NAD(+) + (deoxyribonucleotide)n-3'-hydroxyl + 5'-phospho-(deoxyribonucleotide)m = (deoxyribonucleotide)n+m + AMP + beta-nicotinamide D-nucleotide.</text>
        <dbReference type="EC" id="6.5.1.2"/>
    </reaction>
</comment>
<comment type="cofactor">
    <cofactor evidence="1">
        <name>Mg(2+)</name>
        <dbReference type="ChEBI" id="CHEBI:18420"/>
    </cofactor>
    <cofactor evidence="1">
        <name>Mn(2+)</name>
        <dbReference type="ChEBI" id="CHEBI:29035"/>
    </cofactor>
</comment>
<comment type="similarity">
    <text evidence="1">Belongs to the NAD-dependent DNA ligase family. LigA subfamily.</text>
</comment>
<feature type="chain" id="PRO_0000313194" description="DNA ligase">
    <location>
        <begin position="1"/>
        <end position="664"/>
    </location>
</feature>
<feature type="domain" description="BRCT" evidence="1">
    <location>
        <begin position="587"/>
        <end position="664"/>
    </location>
</feature>
<feature type="active site" description="N6-AMP-lysine intermediate" evidence="1">
    <location>
        <position position="122"/>
    </location>
</feature>
<feature type="binding site" evidence="1">
    <location>
        <begin position="32"/>
        <end position="36"/>
    </location>
    <ligand>
        <name>NAD(+)</name>
        <dbReference type="ChEBI" id="CHEBI:57540"/>
    </ligand>
</feature>
<feature type="binding site" evidence="1">
    <location>
        <begin position="80"/>
        <end position="81"/>
    </location>
    <ligand>
        <name>NAD(+)</name>
        <dbReference type="ChEBI" id="CHEBI:57540"/>
    </ligand>
</feature>
<feature type="binding site" evidence="1">
    <location>
        <position position="144"/>
    </location>
    <ligand>
        <name>NAD(+)</name>
        <dbReference type="ChEBI" id="CHEBI:57540"/>
    </ligand>
</feature>
<feature type="binding site" evidence="1">
    <location>
        <position position="178"/>
    </location>
    <ligand>
        <name>NAD(+)</name>
        <dbReference type="ChEBI" id="CHEBI:57540"/>
    </ligand>
</feature>
<feature type="binding site" evidence="1">
    <location>
        <position position="314"/>
    </location>
    <ligand>
        <name>NAD(+)</name>
        <dbReference type="ChEBI" id="CHEBI:57540"/>
    </ligand>
</feature>
<feature type="binding site" evidence="1">
    <location>
        <position position="407"/>
    </location>
    <ligand>
        <name>Zn(2+)</name>
        <dbReference type="ChEBI" id="CHEBI:29105"/>
    </ligand>
</feature>
<feature type="binding site" evidence="1">
    <location>
        <position position="410"/>
    </location>
    <ligand>
        <name>Zn(2+)</name>
        <dbReference type="ChEBI" id="CHEBI:29105"/>
    </ligand>
</feature>
<feature type="binding site" evidence="1">
    <location>
        <position position="423"/>
    </location>
    <ligand>
        <name>Zn(2+)</name>
        <dbReference type="ChEBI" id="CHEBI:29105"/>
    </ligand>
</feature>
<feature type="binding site" evidence="1">
    <location>
        <position position="429"/>
    </location>
    <ligand>
        <name>Zn(2+)</name>
        <dbReference type="ChEBI" id="CHEBI:29105"/>
    </ligand>
</feature>
<proteinExistence type="inferred from homology"/>
<gene>
    <name evidence="1" type="primary">ligA</name>
    <name type="ordered locus">CLB_3327</name>
</gene>
<sequence>MDNKLEKMKELVEELNQYAYEYYVLDNPSISDKEYDLKYDELVILEKKTEVTLPYSPTQRVGDKILGEFSKYTHKGRLWSLDKAQNMEQLIEWHNRNLKVIEQYNSMSEDKLPELRYIVTKKFDGLTVNCTYDENGILIKSATRGTGIIGEDITAQIKTIKTVPLKIKNNHVIEVHGEAIMTKTAFEEYNKAAQVPLKNLRNGAAGALRNLDIKETARRNLSAFFYDVGYNEGPEFKSYREMMNFIKNMGLPQDKYIKECTNMEEVEKEIEYIESIRGELDYDIDGAVIVVDDIKTREILGYTIKFPKWAIAYKFEAKEITTKLLDVEWNVGRSGRVTPTALLEPVELGGVTVKRATLNNMDDIKRKNVKLGAKVLVRRSNDVIPEIMGVVEESLEESKEIQAPDRCPYCNSHLVQNGVHYYCENTLSCKPQMVKSIVHFASREAMNIAGFSEKTAEQLFEKLDIKSIADLYKIKKEELLTLEKFKDKKSQNLIDAIQNSKNCDLASFIYALGIPNVGKKTANDLVMKFKTLESIKNTTIEQLVEVPDVGEIVAKSIYDFFEDEKVISNIEELLNLGVKPYYEEERIDENPFMDKTIVVTGSLNNYSRGEIKDKLQSLGAKVSSSVSKNTDYVLVGEKPGSKYEKAIELGVKVINEEEFSNKIK</sequence>
<protein>
    <recommendedName>
        <fullName evidence="1">DNA ligase</fullName>
        <ecNumber evidence="1">6.5.1.2</ecNumber>
    </recommendedName>
    <alternativeName>
        <fullName evidence="1">Polydeoxyribonucleotide synthase [NAD(+)]</fullName>
    </alternativeName>
</protein>
<name>DNLJ_CLOB1</name>
<reference key="1">
    <citation type="journal article" date="2007" name="PLoS ONE">
        <title>Analysis of the neurotoxin complex genes in Clostridium botulinum A1-A4 and B1 strains: BoNT/A3, /Ba4 and /B1 clusters are located within plasmids.</title>
        <authorList>
            <person name="Smith T.J."/>
            <person name="Hill K.K."/>
            <person name="Foley B.T."/>
            <person name="Detter J.C."/>
            <person name="Munk A.C."/>
            <person name="Bruce D.C."/>
            <person name="Doggett N.A."/>
            <person name="Smith L.A."/>
            <person name="Marks J.D."/>
            <person name="Xie G."/>
            <person name="Brettin T.S."/>
        </authorList>
    </citation>
    <scope>NUCLEOTIDE SEQUENCE [LARGE SCALE GENOMIC DNA]</scope>
    <source>
        <strain>ATCC 19397 / Type A</strain>
    </source>
</reference>
<keyword id="KW-0227">DNA damage</keyword>
<keyword id="KW-0234">DNA repair</keyword>
<keyword id="KW-0235">DNA replication</keyword>
<keyword id="KW-0436">Ligase</keyword>
<keyword id="KW-0460">Magnesium</keyword>
<keyword id="KW-0464">Manganese</keyword>
<keyword id="KW-0479">Metal-binding</keyword>
<keyword id="KW-0520">NAD</keyword>
<keyword id="KW-0862">Zinc</keyword>
<organism>
    <name type="scientific">Clostridium botulinum (strain ATCC 19397 / Type A)</name>
    <dbReference type="NCBI Taxonomy" id="441770"/>
    <lineage>
        <taxon>Bacteria</taxon>
        <taxon>Bacillati</taxon>
        <taxon>Bacillota</taxon>
        <taxon>Clostridia</taxon>
        <taxon>Eubacteriales</taxon>
        <taxon>Clostridiaceae</taxon>
        <taxon>Clostridium</taxon>
    </lineage>
</organism>
<accession>A7FYL7</accession>
<dbReference type="EC" id="6.5.1.2" evidence="1"/>
<dbReference type="EMBL" id="CP000726">
    <property type="protein sequence ID" value="ABS33448.1"/>
    <property type="molecule type" value="Genomic_DNA"/>
</dbReference>
<dbReference type="RefSeq" id="WP_012048227.1">
    <property type="nucleotide sequence ID" value="NC_009697.1"/>
</dbReference>
<dbReference type="SMR" id="A7FYL7"/>
<dbReference type="GeneID" id="5187299"/>
<dbReference type="KEGG" id="cba:CLB_3327"/>
<dbReference type="HOGENOM" id="CLU_007764_2_1_9"/>
<dbReference type="GO" id="GO:0005829">
    <property type="term" value="C:cytosol"/>
    <property type="evidence" value="ECO:0007669"/>
    <property type="project" value="TreeGrafter"/>
</dbReference>
<dbReference type="GO" id="GO:0003677">
    <property type="term" value="F:DNA binding"/>
    <property type="evidence" value="ECO:0007669"/>
    <property type="project" value="InterPro"/>
</dbReference>
<dbReference type="GO" id="GO:0003911">
    <property type="term" value="F:DNA ligase (NAD+) activity"/>
    <property type="evidence" value="ECO:0007669"/>
    <property type="project" value="UniProtKB-UniRule"/>
</dbReference>
<dbReference type="GO" id="GO:0046872">
    <property type="term" value="F:metal ion binding"/>
    <property type="evidence" value="ECO:0007669"/>
    <property type="project" value="UniProtKB-KW"/>
</dbReference>
<dbReference type="GO" id="GO:0006281">
    <property type="term" value="P:DNA repair"/>
    <property type="evidence" value="ECO:0007669"/>
    <property type="project" value="UniProtKB-KW"/>
</dbReference>
<dbReference type="GO" id="GO:0006260">
    <property type="term" value="P:DNA replication"/>
    <property type="evidence" value="ECO:0007669"/>
    <property type="project" value="UniProtKB-KW"/>
</dbReference>
<dbReference type="CDD" id="cd17748">
    <property type="entry name" value="BRCT_DNA_ligase_like"/>
    <property type="match status" value="1"/>
</dbReference>
<dbReference type="CDD" id="cd09897">
    <property type="entry name" value="H3TH_FEN1-XPG-like"/>
    <property type="match status" value="1"/>
</dbReference>
<dbReference type="CDD" id="cd00114">
    <property type="entry name" value="LIGANc"/>
    <property type="match status" value="1"/>
</dbReference>
<dbReference type="FunFam" id="1.10.150.20:FF:000006">
    <property type="entry name" value="DNA ligase"/>
    <property type="match status" value="1"/>
</dbReference>
<dbReference type="FunFam" id="1.10.150.20:FF:000007">
    <property type="entry name" value="DNA ligase"/>
    <property type="match status" value="1"/>
</dbReference>
<dbReference type="FunFam" id="2.40.50.140:FF:000012">
    <property type="entry name" value="DNA ligase"/>
    <property type="match status" value="1"/>
</dbReference>
<dbReference type="FunFam" id="3.30.470.30:FF:000030">
    <property type="entry name" value="DNA ligase"/>
    <property type="match status" value="1"/>
</dbReference>
<dbReference type="Gene3D" id="1.10.150.20">
    <property type="entry name" value="5' to 3' exonuclease, C-terminal subdomain"/>
    <property type="match status" value="2"/>
</dbReference>
<dbReference type="Gene3D" id="3.40.50.10190">
    <property type="entry name" value="BRCT domain"/>
    <property type="match status" value="1"/>
</dbReference>
<dbReference type="Gene3D" id="3.30.470.30">
    <property type="entry name" value="DNA ligase/mRNA capping enzyme"/>
    <property type="match status" value="1"/>
</dbReference>
<dbReference type="Gene3D" id="1.10.287.610">
    <property type="entry name" value="Helix hairpin bin"/>
    <property type="match status" value="1"/>
</dbReference>
<dbReference type="Gene3D" id="2.40.50.140">
    <property type="entry name" value="Nucleic acid-binding proteins"/>
    <property type="match status" value="1"/>
</dbReference>
<dbReference type="HAMAP" id="MF_01588">
    <property type="entry name" value="DNA_ligase_A"/>
    <property type="match status" value="1"/>
</dbReference>
<dbReference type="InterPro" id="IPR001357">
    <property type="entry name" value="BRCT_dom"/>
</dbReference>
<dbReference type="InterPro" id="IPR036420">
    <property type="entry name" value="BRCT_dom_sf"/>
</dbReference>
<dbReference type="InterPro" id="IPR041663">
    <property type="entry name" value="DisA/LigA_HHH"/>
</dbReference>
<dbReference type="InterPro" id="IPR001679">
    <property type="entry name" value="DNA_ligase"/>
</dbReference>
<dbReference type="InterPro" id="IPR033136">
    <property type="entry name" value="DNA_ligase_CS"/>
</dbReference>
<dbReference type="InterPro" id="IPR013839">
    <property type="entry name" value="DNAligase_adenylation"/>
</dbReference>
<dbReference type="InterPro" id="IPR013840">
    <property type="entry name" value="DNAligase_N"/>
</dbReference>
<dbReference type="InterPro" id="IPR003583">
    <property type="entry name" value="Hlx-hairpin-Hlx_DNA-bd_motif"/>
</dbReference>
<dbReference type="InterPro" id="IPR012340">
    <property type="entry name" value="NA-bd_OB-fold"/>
</dbReference>
<dbReference type="InterPro" id="IPR004150">
    <property type="entry name" value="NAD_DNA_ligase_OB"/>
</dbReference>
<dbReference type="InterPro" id="IPR010994">
    <property type="entry name" value="RuvA_2-like"/>
</dbReference>
<dbReference type="NCBIfam" id="TIGR00575">
    <property type="entry name" value="dnlj"/>
    <property type="match status" value="1"/>
</dbReference>
<dbReference type="NCBIfam" id="NF005932">
    <property type="entry name" value="PRK07956.1"/>
    <property type="match status" value="1"/>
</dbReference>
<dbReference type="PANTHER" id="PTHR23389">
    <property type="entry name" value="CHROMOSOME TRANSMISSION FIDELITY FACTOR 18"/>
    <property type="match status" value="1"/>
</dbReference>
<dbReference type="PANTHER" id="PTHR23389:SF9">
    <property type="entry name" value="DNA LIGASE"/>
    <property type="match status" value="1"/>
</dbReference>
<dbReference type="Pfam" id="PF00533">
    <property type="entry name" value="BRCT"/>
    <property type="match status" value="1"/>
</dbReference>
<dbReference type="Pfam" id="PF01653">
    <property type="entry name" value="DNA_ligase_aden"/>
    <property type="match status" value="1"/>
</dbReference>
<dbReference type="Pfam" id="PF03120">
    <property type="entry name" value="DNA_ligase_OB"/>
    <property type="match status" value="1"/>
</dbReference>
<dbReference type="Pfam" id="PF12826">
    <property type="entry name" value="HHH_2"/>
    <property type="match status" value="1"/>
</dbReference>
<dbReference type="Pfam" id="PF14520">
    <property type="entry name" value="HHH_5"/>
    <property type="match status" value="1"/>
</dbReference>
<dbReference type="PIRSF" id="PIRSF001604">
    <property type="entry name" value="LigA"/>
    <property type="match status" value="1"/>
</dbReference>
<dbReference type="SMART" id="SM00292">
    <property type="entry name" value="BRCT"/>
    <property type="match status" value="1"/>
</dbReference>
<dbReference type="SMART" id="SM00278">
    <property type="entry name" value="HhH1"/>
    <property type="match status" value="4"/>
</dbReference>
<dbReference type="SMART" id="SM00532">
    <property type="entry name" value="LIGANc"/>
    <property type="match status" value="1"/>
</dbReference>
<dbReference type="SUPFAM" id="SSF52113">
    <property type="entry name" value="BRCT domain"/>
    <property type="match status" value="1"/>
</dbReference>
<dbReference type="SUPFAM" id="SSF56091">
    <property type="entry name" value="DNA ligase/mRNA capping enzyme, catalytic domain"/>
    <property type="match status" value="1"/>
</dbReference>
<dbReference type="SUPFAM" id="SSF50249">
    <property type="entry name" value="Nucleic acid-binding proteins"/>
    <property type="match status" value="1"/>
</dbReference>
<dbReference type="SUPFAM" id="SSF47781">
    <property type="entry name" value="RuvA domain 2-like"/>
    <property type="match status" value="1"/>
</dbReference>
<dbReference type="PROSITE" id="PS50172">
    <property type="entry name" value="BRCT"/>
    <property type="match status" value="1"/>
</dbReference>
<dbReference type="PROSITE" id="PS01056">
    <property type="entry name" value="DNA_LIGASE_N2"/>
    <property type="match status" value="1"/>
</dbReference>